<organism>
    <name type="scientific">Escherichia coli (strain SE11)</name>
    <dbReference type="NCBI Taxonomy" id="409438"/>
    <lineage>
        <taxon>Bacteria</taxon>
        <taxon>Pseudomonadati</taxon>
        <taxon>Pseudomonadota</taxon>
        <taxon>Gammaproteobacteria</taxon>
        <taxon>Enterobacterales</taxon>
        <taxon>Enterobacteriaceae</taxon>
        <taxon>Escherichia</taxon>
    </lineage>
</organism>
<keyword id="KW-0324">Glycolysis</keyword>
<keyword id="KW-0413">Isomerase</keyword>
<evidence type="ECO:0000255" key="1">
    <source>
        <dbReference type="HAMAP-Rule" id="MF_01040"/>
    </source>
</evidence>
<gene>
    <name evidence="1" type="primary">gpmB</name>
    <name type="ordered locus">ECSE_4671</name>
</gene>
<proteinExistence type="inferred from homology"/>
<sequence>MLQVYLVRHGETQWNAERRIQGQSDSPLTAKGEQQAMQVATRAKELGITHIISSDLGRTRRTAEIIAQACGCDIIFDSRLRELNMGVLEKRHIDSLTEEEENWRRQLVNGTVDGRIPEGESMQELSDRVNAALESCRDLPQGSRPLLVSHGIALGCLVSTILGLPAWAERRLRLRNCSISRVDYQESLWLASGWVVETAGDISHLDAPALDELQR</sequence>
<feature type="chain" id="PRO_1000136005" description="Probable phosphoglycerate mutase GpmB">
    <location>
        <begin position="1"/>
        <end position="215"/>
    </location>
</feature>
<feature type="active site" description="Tele-phosphohistidine intermediate" evidence="1">
    <location>
        <position position="9"/>
    </location>
</feature>
<feature type="active site" description="Proton donor/acceptor" evidence="1">
    <location>
        <position position="82"/>
    </location>
</feature>
<feature type="binding site" evidence="1">
    <location>
        <begin position="8"/>
        <end position="15"/>
    </location>
    <ligand>
        <name>substrate</name>
    </ligand>
</feature>
<feature type="binding site" evidence="1">
    <location>
        <begin position="21"/>
        <end position="22"/>
    </location>
    <ligand>
        <name>substrate</name>
    </ligand>
</feature>
<feature type="binding site" evidence="1">
    <location>
        <position position="58"/>
    </location>
    <ligand>
        <name>substrate</name>
    </ligand>
</feature>
<feature type="binding site" evidence="1">
    <location>
        <position position="60"/>
    </location>
    <ligand>
        <name>substrate</name>
    </ligand>
</feature>
<feature type="binding site" evidence="1">
    <location>
        <begin position="82"/>
        <end position="85"/>
    </location>
    <ligand>
        <name>substrate</name>
    </ligand>
</feature>
<feature type="binding site" evidence="1">
    <location>
        <begin position="104"/>
        <end position="105"/>
    </location>
    <ligand>
        <name>substrate</name>
    </ligand>
</feature>
<feature type="binding site" evidence="1">
    <location>
        <begin position="151"/>
        <end position="152"/>
    </location>
    <ligand>
        <name>substrate</name>
    </ligand>
</feature>
<feature type="site" description="Transition state stabilizer" evidence="1">
    <location>
        <position position="150"/>
    </location>
</feature>
<protein>
    <recommendedName>
        <fullName evidence="1">Probable phosphoglycerate mutase GpmB</fullName>
        <ecNumber evidence="1">5.4.2.-</ecNumber>
    </recommendedName>
    <alternativeName>
        <fullName evidence="1">PGAM</fullName>
    </alternativeName>
    <alternativeName>
        <fullName evidence="1">Phosphoglyceromutase</fullName>
    </alternativeName>
</protein>
<name>GPMB_ECOSE</name>
<dbReference type="EC" id="5.4.2.-" evidence="1"/>
<dbReference type="EMBL" id="AP009240">
    <property type="protein sequence ID" value="BAG80195.1"/>
    <property type="molecule type" value="Genomic_DNA"/>
</dbReference>
<dbReference type="RefSeq" id="WP_000942344.1">
    <property type="nucleotide sequence ID" value="NC_011415.1"/>
</dbReference>
<dbReference type="SMR" id="B6I6P3"/>
<dbReference type="GeneID" id="93777450"/>
<dbReference type="KEGG" id="ecy:ECSE_4671"/>
<dbReference type="HOGENOM" id="CLU_033323_9_5_6"/>
<dbReference type="UniPathway" id="UPA00109">
    <property type="reaction ID" value="UER00186"/>
</dbReference>
<dbReference type="Proteomes" id="UP000008199">
    <property type="component" value="Chromosome"/>
</dbReference>
<dbReference type="GO" id="GO:0005737">
    <property type="term" value="C:cytoplasm"/>
    <property type="evidence" value="ECO:0007669"/>
    <property type="project" value="TreeGrafter"/>
</dbReference>
<dbReference type="GO" id="GO:0016791">
    <property type="term" value="F:phosphatase activity"/>
    <property type="evidence" value="ECO:0007669"/>
    <property type="project" value="TreeGrafter"/>
</dbReference>
<dbReference type="GO" id="GO:0004619">
    <property type="term" value="F:phosphoglycerate mutase activity"/>
    <property type="evidence" value="ECO:0007669"/>
    <property type="project" value="UniProtKB-UniRule"/>
</dbReference>
<dbReference type="GO" id="GO:0006096">
    <property type="term" value="P:glycolytic process"/>
    <property type="evidence" value="ECO:0007669"/>
    <property type="project" value="UniProtKB-UniRule"/>
</dbReference>
<dbReference type="CDD" id="cd07067">
    <property type="entry name" value="HP_PGM_like"/>
    <property type="match status" value="1"/>
</dbReference>
<dbReference type="Gene3D" id="3.40.50.1240">
    <property type="entry name" value="Phosphoglycerate mutase-like"/>
    <property type="match status" value="1"/>
</dbReference>
<dbReference type="HAMAP" id="MF_01040">
    <property type="entry name" value="PGAM_GpmB"/>
    <property type="match status" value="1"/>
</dbReference>
<dbReference type="InterPro" id="IPR013078">
    <property type="entry name" value="His_Pase_superF_clade-1"/>
</dbReference>
<dbReference type="InterPro" id="IPR029033">
    <property type="entry name" value="His_PPase_superfam"/>
</dbReference>
<dbReference type="InterPro" id="IPR001345">
    <property type="entry name" value="PG/BPGM_mutase_AS"/>
</dbReference>
<dbReference type="InterPro" id="IPR050275">
    <property type="entry name" value="PGM_Phosphatase"/>
</dbReference>
<dbReference type="InterPro" id="IPR023086">
    <property type="entry name" value="Phosphoglycerate_mutase_GpmB"/>
</dbReference>
<dbReference type="NCBIfam" id="NF002901">
    <property type="entry name" value="PRK03482.1"/>
    <property type="match status" value="1"/>
</dbReference>
<dbReference type="PANTHER" id="PTHR48100">
    <property type="entry name" value="BROAD-SPECIFICITY PHOSPHATASE YOR283W-RELATED"/>
    <property type="match status" value="1"/>
</dbReference>
<dbReference type="PANTHER" id="PTHR48100:SF1">
    <property type="entry name" value="HISTIDINE PHOSPHATASE FAMILY PROTEIN-RELATED"/>
    <property type="match status" value="1"/>
</dbReference>
<dbReference type="Pfam" id="PF00300">
    <property type="entry name" value="His_Phos_1"/>
    <property type="match status" value="1"/>
</dbReference>
<dbReference type="SMART" id="SM00855">
    <property type="entry name" value="PGAM"/>
    <property type="match status" value="1"/>
</dbReference>
<dbReference type="SUPFAM" id="SSF53254">
    <property type="entry name" value="Phosphoglycerate mutase-like"/>
    <property type="match status" value="1"/>
</dbReference>
<dbReference type="PROSITE" id="PS00175">
    <property type="entry name" value="PG_MUTASE"/>
    <property type="match status" value="1"/>
</dbReference>
<comment type="catalytic activity">
    <reaction evidence="1">
        <text>(2R)-2-phosphoglycerate = (2R)-3-phosphoglycerate</text>
        <dbReference type="Rhea" id="RHEA:15901"/>
        <dbReference type="ChEBI" id="CHEBI:58272"/>
        <dbReference type="ChEBI" id="CHEBI:58289"/>
    </reaction>
</comment>
<comment type="pathway">
    <text evidence="1">Carbohydrate degradation; glycolysis; pyruvate from D-glyceraldehyde 3-phosphate: step 3/5.</text>
</comment>
<comment type="similarity">
    <text evidence="1">Belongs to the phosphoglycerate mutase family. GpmB subfamily.</text>
</comment>
<reference key="1">
    <citation type="journal article" date="2008" name="DNA Res.">
        <title>Complete genome sequence and comparative analysis of the wild-type commensal Escherichia coli strain SE11 isolated from a healthy adult.</title>
        <authorList>
            <person name="Oshima K."/>
            <person name="Toh H."/>
            <person name="Ogura Y."/>
            <person name="Sasamoto H."/>
            <person name="Morita H."/>
            <person name="Park S.-H."/>
            <person name="Ooka T."/>
            <person name="Iyoda S."/>
            <person name="Taylor T.D."/>
            <person name="Hayashi T."/>
            <person name="Itoh K."/>
            <person name="Hattori M."/>
        </authorList>
    </citation>
    <scope>NUCLEOTIDE SEQUENCE [LARGE SCALE GENOMIC DNA]</scope>
    <source>
        <strain>SE11</strain>
    </source>
</reference>
<accession>B6I6P3</accession>